<evidence type="ECO:0000255" key="1">
    <source>
        <dbReference type="HAMAP-Rule" id="MF_01306"/>
    </source>
</evidence>
<evidence type="ECO:0000256" key="2">
    <source>
        <dbReference type="SAM" id="MobiDB-lite"/>
    </source>
</evidence>
<evidence type="ECO:0000305" key="3"/>
<gene>
    <name evidence="1" type="primary">rpsD</name>
    <name type="ordered locus">RBAM_026590</name>
</gene>
<name>RS4_BACVZ</name>
<protein>
    <recommendedName>
        <fullName evidence="1">Small ribosomal subunit protein uS4</fullName>
    </recommendedName>
    <alternativeName>
        <fullName evidence="3">30S ribosomal protein S4</fullName>
    </alternativeName>
</protein>
<feature type="chain" id="PRO_0000322265" description="Small ribosomal subunit protein uS4">
    <location>
        <begin position="1"/>
        <end position="200"/>
    </location>
</feature>
<feature type="domain" description="S4 RNA-binding" evidence="1">
    <location>
        <begin position="92"/>
        <end position="155"/>
    </location>
</feature>
<feature type="region of interest" description="Disordered" evidence="2">
    <location>
        <begin position="22"/>
        <end position="42"/>
    </location>
</feature>
<comment type="function">
    <text evidence="1">One of the primary rRNA binding proteins, it binds directly to 16S rRNA where it nucleates assembly of the body of the 30S subunit.</text>
</comment>
<comment type="function">
    <text evidence="1">With S5 and S12 plays an important role in translational accuracy.</text>
</comment>
<comment type="subunit">
    <text evidence="1">Part of the 30S ribosomal subunit. Contacts protein S5. The interaction surface between S4 and S5 is involved in control of translational fidelity.</text>
</comment>
<comment type="similarity">
    <text evidence="1">Belongs to the universal ribosomal protein uS4 family.</text>
</comment>
<accession>A7Z7P1</accession>
<sequence length="200" mass="22896">MARYTGPSWKLSRRLGISLSGTGKELEKRPYAPGPHGPGQRKKLSEYGLQLQEKQKLRHMYGVNERQFRTLFDKAAKMTGKHGENFMILLDARLDNVVYKLGLARTRRQARQLVNHGHILVDGSRVDIPSYQVKPGQTIGVREKSRNLSIIKESVEVNNFVPEYLTFDAEKLEGTFTRLPERSELAPEINEALIVEFYSR</sequence>
<organism>
    <name type="scientific">Bacillus velezensis (strain DSM 23117 / BGSC 10A6 / LMG 26770 / FZB42)</name>
    <name type="common">Bacillus amyloliquefaciens subsp. plantarum</name>
    <dbReference type="NCBI Taxonomy" id="326423"/>
    <lineage>
        <taxon>Bacteria</taxon>
        <taxon>Bacillati</taxon>
        <taxon>Bacillota</taxon>
        <taxon>Bacilli</taxon>
        <taxon>Bacillales</taxon>
        <taxon>Bacillaceae</taxon>
        <taxon>Bacillus</taxon>
        <taxon>Bacillus amyloliquefaciens group</taxon>
    </lineage>
</organism>
<reference key="1">
    <citation type="journal article" date="2007" name="Nat. Biotechnol.">
        <title>Comparative analysis of the complete genome sequence of the plant growth-promoting bacterium Bacillus amyloliquefaciens FZB42.</title>
        <authorList>
            <person name="Chen X.H."/>
            <person name="Koumoutsi A."/>
            <person name="Scholz R."/>
            <person name="Eisenreich A."/>
            <person name="Schneider K."/>
            <person name="Heinemeyer I."/>
            <person name="Morgenstern B."/>
            <person name="Voss B."/>
            <person name="Hess W.R."/>
            <person name="Reva O."/>
            <person name="Junge H."/>
            <person name="Voigt B."/>
            <person name="Jungblut P.R."/>
            <person name="Vater J."/>
            <person name="Suessmuth R."/>
            <person name="Liesegang H."/>
            <person name="Strittmatter A."/>
            <person name="Gottschalk G."/>
            <person name="Borriss R."/>
        </authorList>
    </citation>
    <scope>NUCLEOTIDE SEQUENCE [LARGE SCALE GENOMIC DNA]</scope>
    <source>
        <strain>DSM 23117 / BGSC 10A6 / LMG 26770 / FZB42</strain>
    </source>
</reference>
<keyword id="KW-0687">Ribonucleoprotein</keyword>
<keyword id="KW-0689">Ribosomal protein</keyword>
<keyword id="KW-0694">RNA-binding</keyword>
<keyword id="KW-0699">rRNA-binding</keyword>
<proteinExistence type="inferred from homology"/>
<dbReference type="EMBL" id="CP000560">
    <property type="protein sequence ID" value="ABS75017.1"/>
    <property type="molecule type" value="Genomic_DNA"/>
</dbReference>
<dbReference type="RefSeq" id="WP_003152406.1">
    <property type="nucleotide sequence ID" value="NC_009725.2"/>
</dbReference>
<dbReference type="SMR" id="A7Z7P1"/>
<dbReference type="GeneID" id="93081801"/>
<dbReference type="KEGG" id="bay:RBAM_026590"/>
<dbReference type="HOGENOM" id="CLU_092403_0_1_9"/>
<dbReference type="Proteomes" id="UP000001120">
    <property type="component" value="Chromosome"/>
</dbReference>
<dbReference type="GO" id="GO:0015935">
    <property type="term" value="C:small ribosomal subunit"/>
    <property type="evidence" value="ECO:0007669"/>
    <property type="project" value="InterPro"/>
</dbReference>
<dbReference type="GO" id="GO:0019843">
    <property type="term" value="F:rRNA binding"/>
    <property type="evidence" value="ECO:0007669"/>
    <property type="project" value="UniProtKB-UniRule"/>
</dbReference>
<dbReference type="GO" id="GO:0003735">
    <property type="term" value="F:structural constituent of ribosome"/>
    <property type="evidence" value="ECO:0007669"/>
    <property type="project" value="InterPro"/>
</dbReference>
<dbReference type="GO" id="GO:0042274">
    <property type="term" value="P:ribosomal small subunit biogenesis"/>
    <property type="evidence" value="ECO:0007669"/>
    <property type="project" value="TreeGrafter"/>
</dbReference>
<dbReference type="GO" id="GO:0006412">
    <property type="term" value="P:translation"/>
    <property type="evidence" value="ECO:0007669"/>
    <property type="project" value="UniProtKB-UniRule"/>
</dbReference>
<dbReference type="CDD" id="cd00165">
    <property type="entry name" value="S4"/>
    <property type="match status" value="1"/>
</dbReference>
<dbReference type="FunFam" id="1.10.1050.10:FF:000001">
    <property type="entry name" value="30S ribosomal protein S4"/>
    <property type="match status" value="1"/>
</dbReference>
<dbReference type="FunFam" id="3.10.290.10:FF:000001">
    <property type="entry name" value="30S ribosomal protein S4"/>
    <property type="match status" value="1"/>
</dbReference>
<dbReference type="Gene3D" id="1.10.1050.10">
    <property type="entry name" value="Ribosomal Protein S4 Delta 41, Chain A, domain 1"/>
    <property type="match status" value="1"/>
</dbReference>
<dbReference type="Gene3D" id="3.10.290.10">
    <property type="entry name" value="RNA-binding S4 domain"/>
    <property type="match status" value="1"/>
</dbReference>
<dbReference type="HAMAP" id="MF_01306_B">
    <property type="entry name" value="Ribosomal_uS4_B"/>
    <property type="match status" value="1"/>
</dbReference>
<dbReference type="InterPro" id="IPR022801">
    <property type="entry name" value="Ribosomal_uS4"/>
</dbReference>
<dbReference type="InterPro" id="IPR005709">
    <property type="entry name" value="Ribosomal_uS4_bac-type"/>
</dbReference>
<dbReference type="InterPro" id="IPR018079">
    <property type="entry name" value="Ribosomal_uS4_CS"/>
</dbReference>
<dbReference type="InterPro" id="IPR001912">
    <property type="entry name" value="Ribosomal_uS4_N"/>
</dbReference>
<dbReference type="InterPro" id="IPR002942">
    <property type="entry name" value="S4_RNA-bd"/>
</dbReference>
<dbReference type="InterPro" id="IPR036986">
    <property type="entry name" value="S4_RNA-bd_sf"/>
</dbReference>
<dbReference type="NCBIfam" id="NF003717">
    <property type="entry name" value="PRK05327.1"/>
    <property type="match status" value="1"/>
</dbReference>
<dbReference type="NCBIfam" id="TIGR01017">
    <property type="entry name" value="rpsD_bact"/>
    <property type="match status" value="1"/>
</dbReference>
<dbReference type="PANTHER" id="PTHR11831">
    <property type="entry name" value="30S 40S RIBOSOMAL PROTEIN"/>
    <property type="match status" value="1"/>
</dbReference>
<dbReference type="PANTHER" id="PTHR11831:SF4">
    <property type="entry name" value="SMALL RIBOSOMAL SUBUNIT PROTEIN US4M"/>
    <property type="match status" value="1"/>
</dbReference>
<dbReference type="Pfam" id="PF00163">
    <property type="entry name" value="Ribosomal_S4"/>
    <property type="match status" value="1"/>
</dbReference>
<dbReference type="Pfam" id="PF01479">
    <property type="entry name" value="S4"/>
    <property type="match status" value="1"/>
</dbReference>
<dbReference type="SMART" id="SM01390">
    <property type="entry name" value="Ribosomal_S4"/>
    <property type="match status" value="1"/>
</dbReference>
<dbReference type="SMART" id="SM00363">
    <property type="entry name" value="S4"/>
    <property type="match status" value="1"/>
</dbReference>
<dbReference type="SUPFAM" id="SSF55174">
    <property type="entry name" value="Alpha-L RNA-binding motif"/>
    <property type="match status" value="1"/>
</dbReference>
<dbReference type="PROSITE" id="PS00632">
    <property type="entry name" value="RIBOSOMAL_S4"/>
    <property type="match status" value="1"/>
</dbReference>
<dbReference type="PROSITE" id="PS50889">
    <property type="entry name" value="S4"/>
    <property type="match status" value="1"/>
</dbReference>